<reference key="1">
    <citation type="submission" date="2007-04" db="EMBL/GenBank/DDBJ databases">
        <title>Complete sequence of Pseudomonas mendocina ymp.</title>
        <authorList>
            <consortium name="US DOE Joint Genome Institute"/>
            <person name="Copeland A."/>
            <person name="Lucas S."/>
            <person name="Lapidus A."/>
            <person name="Barry K."/>
            <person name="Glavina del Rio T."/>
            <person name="Dalin E."/>
            <person name="Tice H."/>
            <person name="Pitluck S."/>
            <person name="Kiss H."/>
            <person name="Brettin T."/>
            <person name="Detter J.C."/>
            <person name="Bruce D."/>
            <person name="Han C."/>
            <person name="Schmutz J."/>
            <person name="Larimer F."/>
            <person name="Land M."/>
            <person name="Hauser L."/>
            <person name="Kyrpides N."/>
            <person name="Mikhailova N."/>
            <person name="Hersman L."/>
            <person name="Dubois J."/>
            <person name="Maurice P."/>
            <person name="Richardson P."/>
        </authorList>
    </citation>
    <scope>NUCLEOTIDE SEQUENCE [LARGE SCALE GENOMIC DNA]</scope>
    <source>
        <strain>ymp</strain>
    </source>
</reference>
<evidence type="ECO:0000255" key="1">
    <source>
        <dbReference type="HAMAP-Rule" id="MF_00747"/>
    </source>
</evidence>
<keyword id="KW-0067">ATP-binding</keyword>
<keyword id="KW-0963">Cytoplasm</keyword>
<keyword id="KW-0329">Glyoxylate bypass</keyword>
<keyword id="KW-0378">Hydrolase</keyword>
<keyword id="KW-0418">Kinase</keyword>
<keyword id="KW-0547">Nucleotide-binding</keyword>
<keyword id="KW-0904">Protein phosphatase</keyword>
<keyword id="KW-0723">Serine/threonine-protein kinase</keyword>
<keyword id="KW-0808">Transferase</keyword>
<keyword id="KW-0816">Tricarboxylic acid cycle</keyword>
<protein>
    <recommendedName>
        <fullName evidence="1">Isocitrate dehydrogenase kinase/phosphatase</fullName>
        <shortName evidence="1">IDH kinase/phosphatase</shortName>
        <shortName evidence="1">IDHK/P</shortName>
        <ecNumber evidence="1">2.7.11.5</ecNumber>
        <ecNumber evidence="1">3.1.3.-</ecNumber>
    </recommendedName>
</protein>
<proteinExistence type="inferred from homology"/>
<comment type="function">
    <text evidence="1">Bifunctional enzyme which can phosphorylate or dephosphorylate isocitrate dehydrogenase (IDH) on a specific serine residue. This is a regulatory mechanism which enables bacteria to bypass the Krebs cycle via the glyoxylate shunt in response to the source of carbon. When bacteria are grown on glucose, IDH is fully active and unphosphorylated, but when grown on acetate or ethanol, the activity of IDH declines drastically concomitant with its phosphorylation.</text>
</comment>
<comment type="catalytic activity">
    <reaction evidence="1">
        <text>L-seryl-[isocitrate dehydrogenase] + ATP = O-phospho-L-seryl-[isocitrate dehydrogenase] + ADP + H(+)</text>
        <dbReference type="Rhea" id="RHEA:43540"/>
        <dbReference type="Rhea" id="RHEA-COMP:10605"/>
        <dbReference type="Rhea" id="RHEA-COMP:10606"/>
        <dbReference type="ChEBI" id="CHEBI:15378"/>
        <dbReference type="ChEBI" id="CHEBI:29999"/>
        <dbReference type="ChEBI" id="CHEBI:30616"/>
        <dbReference type="ChEBI" id="CHEBI:83421"/>
        <dbReference type="ChEBI" id="CHEBI:456216"/>
        <dbReference type="EC" id="2.7.11.5"/>
    </reaction>
</comment>
<comment type="subcellular location">
    <subcellularLocation>
        <location evidence="1">Cytoplasm</location>
    </subcellularLocation>
</comment>
<comment type="similarity">
    <text evidence="1">Belongs to the AceK family.</text>
</comment>
<dbReference type="EC" id="2.7.11.5" evidence="1"/>
<dbReference type="EC" id="3.1.3.-" evidence="1"/>
<dbReference type="EMBL" id="CP000680">
    <property type="protein sequence ID" value="ABP84556.1"/>
    <property type="molecule type" value="Genomic_DNA"/>
</dbReference>
<dbReference type="SMR" id="A4XT90"/>
<dbReference type="STRING" id="399739.Pmen_1792"/>
<dbReference type="KEGG" id="pmy:Pmen_1792"/>
<dbReference type="PATRIC" id="fig|399739.8.peg.1818"/>
<dbReference type="eggNOG" id="COG4579">
    <property type="taxonomic scope" value="Bacteria"/>
</dbReference>
<dbReference type="HOGENOM" id="CLU_033804_1_1_6"/>
<dbReference type="OrthoDB" id="5287793at2"/>
<dbReference type="GO" id="GO:0005737">
    <property type="term" value="C:cytoplasm"/>
    <property type="evidence" value="ECO:0007669"/>
    <property type="project" value="UniProtKB-SubCell"/>
</dbReference>
<dbReference type="GO" id="GO:0008772">
    <property type="term" value="F:[isocitrate dehydrogenase (NADP+)] kinase activity"/>
    <property type="evidence" value="ECO:0007669"/>
    <property type="project" value="UniProtKB-UniRule"/>
</dbReference>
<dbReference type="GO" id="GO:0016208">
    <property type="term" value="F:AMP binding"/>
    <property type="evidence" value="ECO:0007669"/>
    <property type="project" value="TreeGrafter"/>
</dbReference>
<dbReference type="GO" id="GO:0005524">
    <property type="term" value="F:ATP binding"/>
    <property type="evidence" value="ECO:0007669"/>
    <property type="project" value="UniProtKB-UniRule"/>
</dbReference>
<dbReference type="GO" id="GO:0004721">
    <property type="term" value="F:phosphoprotein phosphatase activity"/>
    <property type="evidence" value="ECO:0007669"/>
    <property type="project" value="UniProtKB-KW"/>
</dbReference>
<dbReference type="GO" id="GO:0004674">
    <property type="term" value="F:protein serine/threonine kinase activity"/>
    <property type="evidence" value="ECO:0007669"/>
    <property type="project" value="UniProtKB-KW"/>
</dbReference>
<dbReference type="GO" id="GO:0006006">
    <property type="term" value="P:glucose metabolic process"/>
    <property type="evidence" value="ECO:0007669"/>
    <property type="project" value="InterPro"/>
</dbReference>
<dbReference type="GO" id="GO:0006097">
    <property type="term" value="P:glyoxylate cycle"/>
    <property type="evidence" value="ECO:0007669"/>
    <property type="project" value="UniProtKB-UniRule"/>
</dbReference>
<dbReference type="GO" id="GO:0006099">
    <property type="term" value="P:tricarboxylic acid cycle"/>
    <property type="evidence" value="ECO:0007669"/>
    <property type="project" value="UniProtKB-UniRule"/>
</dbReference>
<dbReference type="HAMAP" id="MF_00747">
    <property type="entry name" value="AceK"/>
    <property type="match status" value="1"/>
</dbReference>
<dbReference type="InterPro" id="IPR046855">
    <property type="entry name" value="AceK_kinase"/>
</dbReference>
<dbReference type="InterPro" id="IPR046854">
    <property type="entry name" value="AceK_regulatory"/>
</dbReference>
<dbReference type="InterPro" id="IPR010452">
    <property type="entry name" value="Isocitrate_DH_AceK"/>
</dbReference>
<dbReference type="NCBIfam" id="NF002804">
    <property type="entry name" value="PRK02946.1"/>
    <property type="match status" value="1"/>
</dbReference>
<dbReference type="PANTHER" id="PTHR39559">
    <property type="match status" value="1"/>
</dbReference>
<dbReference type="PANTHER" id="PTHR39559:SF1">
    <property type="entry name" value="ISOCITRATE DEHYDROGENASE KINASE_PHOSPHATASE"/>
    <property type="match status" value="1"/>
</dbReference>
<dbReference type="Pfam" id="PF06315">
    <property type="entry name" value="AceK_kinase"/>
    <property type="match status" value="1"/>
</dbReference>
<dbReference type="Pfam" id="PF20423">
    <property type="entry name" value="AceK_regulatory"/>
    <property type="match status" value="1"/>
</dbReference>
<dbReference type="PIRSF" id="PIRSF000719">
    <property type="entry name" value="AceK"/>
    <property type="match status" value="1"/>
</dbReference>
<organism>
    <name type="scientific">Ectopseudomonas mendocina (strain ymp)</name>
    <name type="common">Pseudomonas mendocina</name>
    <dbReference type="NCBI Taxonomy" id="399739"/>
    <lineage>
        <taxon>Bacteria</taxon>
        <taxon>Pseudomonadati</taxon>
        <taxon>Pseudomonadota</taxon>
        <taxon>Gammaproteobacteria</taxon>
        <taxon>Pseudomonadales</taxon>
        <taxon>Pseudomonadaceae</taxon>
        <taxon>Ectopseudomonas</taxon>
    </lineage>
</organism>
<feature type="chain" id="PRO_0000315269" description="Isocitrate dehydrogenase kinase/phosphatase">
    <location>
        <begin position="1"/>
        <end position="572"/>
    </location>
</feature>
<feature type="active site" evidence="1">
    <location>
        <position position="373"/>
    </location>
</feature>
<feature type="binding site" evidence="1">
    <location>
        <begin position="317"/>
        <end position="323"/>
    </location>
    <ligand>
        <name>ATP</name>
        <dbReference type="ChEBI" id="CHEBI:30616"/>
    </ligand>
</feature>
<feature type="binding site" evidence="1">
    <location>
        <position position="338"/>
    </location>
    <ligand>
        <name>ATP</name>
        <dbReference type="ChEBI" id="CHEBI:30616"/>
    </ligand>
</feature>
<gene>
    <name evidence="1" type="primary">aceK</name>
    <name type="ordered locus">Pmen_1792</name>
</gene>
<sequence>MGQQWPAGEIARLILDGFDDYREHFRQITDGARVRFEQAQWQEAQRASAARINLYEEKVAQTRERLLEGFDESLLEVGQWPLVKSAYIALIDLRFDDELAETWFNSIFCSLFSHDLISDGCMFIHTTRPSLRNQPSAAQTRNYRPAGELHLALQAIFDDYRFDVSYEDLPRDLQRLEGQLRASLPDWICKDPQQCIELFSSVLYRNKGAYLVGRIYTPDEQWPLVIPLLHREGLGIQVDAAITDEAEVSIIFSFTRSYFMVDVAIPAEFVGFLKRILPGKHIAELYTSIGFYKHGKSEFYRALIGHLASTDDRFIMAPGVRGMVMSVFTLPGFNTVFKIIKDRFAHAKTVDRKTVIEKYRLVKSVDRVGRMADTQEFSDFRFPKAKFEPECLAELLEVAPSTVVVEGDTVLVRHCWTERRMTPLNLYLESASEAQVREALDDYGLAIKQLAAANIFPGDMLLKNFGVTRHGRVVFYDYDEICFLTEVNFRRIPPPRFPEDEMSSEPWYSVGPMDVFPEEFPPFLFADIKQRRLFSQLHGNLYDADYWKQLQDAIRAGKVIDVFPYRRKSPVE</sequence>
<name>ACEK_ECTM1</name>
<accession>A4XT90</accession>